<dbReference type="EC" id="7.1.1.2"/>
<dbReference type="EMBL" id="D31785">
    <property type="protein sequence ID" value="BAA06567.2"/>
    <property type="molecule type" value="Genomic_DNA"/>
</dbReference>
<dbReference type="PIR" id="S58744">
    <property type="entry name" value="S58744"/>
</dbReference>
<dbReference type="RefSeq" id="NP_038212.1">
    <property type="nucleotide sequence ID" value="NC_001762.1"/>
</dbReference>
<dbReference type="SMR" id="P48927"/>
<dbReference type="GeneID" id="800537"/>
<dbReference type="GO" id="GO:0031966">
    <property type="term" value="C:mitochondrial membrane"/>
    <property type="evidence" value="ECO:0007669"/>
    <property type="project" value="UniProtKB-SubCell"/>
</dbReference>
<dbReference type="GO" id="GO:0008137">
    <property type="term" value="F:NADH dehydrogenase (ubiquinone) activity"/>
    <property type="evidence" value="ECO:0007669"/>
    <property type="project" value="UniProtKB-EC"/>
</dbReference>
<dbReference type="Gene3D" id="1.20.120.1200">
    <property type="entry name" value="NADH-ubiquinone/plastoquinone oxidoreductase chain 6, subunit NuoJ"/>
    <property type="match status" value="1"/>
</dbReference>
<dbReference type="InterPro" id="IPR001457">
    <property type="entry name" value="NADH_UbQ/plastoQ_OxRdtase_su6"/>
</dbReference>
<dbReference type="InterPro" id="IPR042106">
    <property type="entry name" value="Nuo/plastoQ_OxRdtase_6_NuoJ"/>
</dbReference>
<dbReference type="PANTHER" id="PTHR33269">
    <property type="entry name" value="NADH-UBIQUINONE OXIDOREDUCTASE CHAIN 6"/>
    <property type="match status" value="1"/>
</dbReference>
<dbReference type="PANTHER" id="PTHR33269:SF17">
    <property type="entry name" value="NADH-UBIQUINONE OXIDOREDUCTASE CHAIN 6"/>
    <property type="match status" value="1"/>
</dbReference>
<dbReference type="Pfam" id="PF00499">
    <property type="entry name" value="Oxidored_q3"/>
    <property type="match status" value="1"/>
</dbReference>
<geneLocation type="mitochondrion"/>
<reference key="1">
    <citation type="journal article" date="1995" name="Curr. Genet.">
        <title>The complete mitochondrial DNA sequence of Hansenula wingei reveals new characteristics of yeast mitochondria.</title>
        <authorList>
            <person name="Sekito T."/>
            <person name="Okamoto K."/>
            <person name="Kitano H."/>
            <person name="Yoshida K."/>
        </authorList>
    </citation>
    <scope>NUCLEOTIDE SEQUENCE [LARGE SCALE GENOMIC DNA]</scope>
    <source>
        <strain>21</strain>
    </source>
</reference>
<protein>
    <recommendedName>
        <fullName>NADH-ubiquinone oxidoreductase chain 6</fullName>
        <ecNumber>7.1.1.2</ecNumber>
    </recommendedName>
    <alternativeName>
        <fullName>NADH dehydrogenase subunit 6</fullName>
    </alternativeName>
</protein>
<comment type="function">
    <text evidence="1">Core subunit of the mitochondrial membrane respiratory chain NADH dehydrogenase (Complex I) that is believed to belong to the minimal assembly required for catalysis. Complex I functions in the transfer of electrons from NADH to the respiratory chain. The immediate electron acceptor for the enzyme is believed to be ubiquinone (By similarity).</text>
</comment>
<comment type="catalytic activity">
    <reaction>
        <text>a ubiquinone + NADH + 5 H(+)(in) = a ubiquinol + NAD(+) + 4 H(+)(out)</text>
        <dbReference type="Rhea" id="RHEA:29091"/>
        <dbReference type="Rhea" id="RHEA-COMP:9565"/>
        <dbReference type="Rhea" id="RHEA-COMP:9566"/>
        <dbReference type="ChEBI" id="CHEBI:15378"/>
        <dbReference type="ChEBI" id="CHEBI:16389"/>
        <dbReference type="ChEBI" id="CHEBI:17976"/>
        <dbReference type="ChEBI" id="CHEBI:57540"/>
        <dbReference type="ChEBI" id="CHEBI:57945"/>
        <dbReference type="EC" id="7.1.1.2"/>
    </reaction>
</comment>
<comment type="subcellular location">
    <subcellularLocation>
        <location evidence="3">Mitochondrion membrane</location>
        <topology evidence="3">Multi-pass membrane protein</topology>
    </subcellularLocation>
</comment>
<comment type="similarity">
    <text evidence="3">Belongs to the complex I subunit 6 family.</text>
</comment>
<accession>P48927</accession>
<keyword id="KW-0249">Electron transport</keyword>
<keyword id="KW-0472">Membrane</keyword>
<keyword id="KW-0496">Mitochondrion</keyword>
<keyword id="KW-0520">NAD</keyword>
<keyword id="KW-0679">Respiratory chain</keyword>
<keyword id="KW-1278">Translocase</keyword>
<keyword id="KW-0812">Transmembrane</keyword>
<keyword id="KW-1133">Transmembrane helix</keyword>
<keyword id="KW-0813">Transport</keyword>
<keyword id="KW-0830">Ubiquinone</keyword>
<feature type="chain" id="PRO_0000118288" description="NADH-ubiquinone oxidoreductase chain 6">
    <location>
        <begin position="1"/>
        <end position="207"/>
    </location>
</feature>
<feature type="transmembrane region" description="Helical" evidence="2">
    <location>
        <begin position="15"/>
        <end position="35"/>
    </location>
</feature>
<feature type="transmembrane region" description="Helical" evidence="2">
    <location>
        <begin position="40"/>
        <end position="60"/>
    </location>
</feature>
<feature type="transmembrane region" description="Helical" evidence="2">
    <location>
        <begin position="66"/>
        <end position="86"/>
    </location>
</feature>
<feature type="transmembrane region" description="Helical" evidence="2">
    <location>
        <begin position="116"/>
        <end position="136"/>
    </location>
</feature>
<feature type="transmembrane region" description="Helical" evidence="2">
    <location>
        <begin position="184"/>
        <end position="204"/>
    </location>
</feature>
<evidence type="ECO:0000250" key="1"/>
<evidence type="ECO:0000255" key="2"/>
<evidence type="ECO:0000305" key="3"/>
<gene>
    <name type="primary">ND6</name>
</gene>
<name>NU6M_WICCA</name>
<sequence length="207" mass="24054">MLYNIININILNSNILLDIISILSIISSIAIILVSNPMYSILYLIILFINIAIYLYLIGISIMSLLYILVYIGAIAVLFLFILSLFTALPYLLESKNLKITELNNTFLHKNNNIPLFILIIIIFYYNMINYFNNIYLNNNNINNNNINNLDNINNILLNNDWYKIFDINHLNQIGFLLYTEYSILLIFISFLLLFSILSAIVLTHNK</sequence>
<proteinExistence type="inferred from homology"/>
<organism>
    <name type="scientific">Wickerhamomyces canadensis</name>
    <name type="common">Yeast</name>
    <name type="synonym">Pichia canadensis</name>
    <dbReference type="NCBI Taxonomy" id="1156965"/>
    <lineage>
        <taxon>Eukaryota</taxon>
        <taxon>Fungi</taxon>
        <taxon>Dikarya</taxon>
        <taxon>Ascomycota</taxon>
        <taxon>Saccharomycotina</taxon>
        <taxon>Saccharomycetes</taxon>
        <taxon>Phaffomycetales</taxon>
        <taxon>Wickerhamomycetaceae</taxon>
        <taxon>Wickerhamomyces</taxon>
    </lineage>
</organism>